<feature type="chain" id="PRO_0000391174" description="NADH-quinone oxidoreductase subunit N">
    <location>
        <begin position="1"/>
        <end position="483"/>
    </location>
</feature>
<feature type="transmembrane region" description="Helical" evidence="1">
    <location>
        <begin position="8"/>
        <end position="28"/>
    </location>
</feature>
<feature type="transmembrane region" description="Helical" evidence="1">
    <location>
        <begin position="45"/>
        <end position="65"/>
    </location>
</feature>
<feature type="transmembrane region" description="Helical" evidence="1">
    <location>
        <begin position="78"/>
        <end position="98"/>
    </location>
</feature>
<feature type="transmembrane region" description="Helical" evidence="1">
    <location>
        <begin position="106"/>
        <end position="126"/>
    </location>
</feature>
<feature type="transmembrane region" description="Helical" evidence="1">
    <location>
        <begin position="131"/>
        <end position="151"/>
    </location>
</feature>
<feature type="transmembrane region" description="Helical" evidence="1">
    <location>
        <begin position="166"/>
        <end position="186"/>
    </location>
</feature>
<feature type="transmembrane region" description="Helical" evidence="1">
    <location>
        <begin position="206"/>
        <end position="226"/>
    </location>
</feature>
<feature type="transmembrane region" description="Helical" evidence="1">
    <location>
        <begin position="241"/>
        <end position="261"/>
    </location>
</feature>
<feature type="transmembrane region" description="Helical" evidence="1">
    <location>
        <begin position="275"/>
        <end position="295"/>
    </location>
</feature>
<feature type="transmembrane region" description="Helical" evidence="1">
    <location>
        <begin position="303"/>
        <end position="323"/>
    </location>
</feature>
<feature type="transmembrane region" description="Helical" evidence="1">
    <location>
        <begin position="330"/>
        <end position="350"/>
    </location>
</feature>
<feature type="transmembrane region" description="Helical" evidence="1">
    <location>
        <begin position="373"/>
        <end position="393"/>
    </location>
</feature>
<feature type="transmembrane region" description="Helical" evidence="1">
    <location>
        <begin position="399"/>
        <end position="419"/>
    </location>
</feature>
<feature type="transmembrane region" description="Helical" evidence="1">
    <location>
        <begin position="452"/>
        <end position="472"/>
    </location>
</feature>
<comment type="function">
    <text evidence="1">NDH-1 shuttles electrons from NADH, via FMN and iron-sulfur (Fe-S) centers, to quinones in the respiratory chain. The immediate electron acceptor for the enzyme in this species is believed to be ubiquinone. Couples the redox reaction to proton translocation (for every two electrons transferred, four hydrogen ions are translocated across the cytoplasmic membrane), and thus conserves the redox energy in a proton gradient.</text>
</comment>
<comment type="catalytic activity">
    <reaction evidence="1">
        <text>a quinone + NADH + 5 H(+)(in) = a quinol + NAD(+) + 4 H(+)(out)</text>
        <dbReference type="Rhea" id="RHEA:57888"/>
        <dbReference type="ChEBI" id="CHEBI:15378"/>
        <dbReference type="ChEBI" id="CHEBI:24646"/>
        <dbReference type="ChEBI" id="CHEBI:57540"/>
        <dbReference type="ChEBI" id="CHEBI:57945"/>
        <dbReference type="ChEBI" id="CHEBI:132124"/>
    </reaction>
</comment>
<comment type="subunit">
    <text evidence="1">NDH-1 is composed of 14 different subunits. Subunits NuoA, H, J, K, L, M, N constitute the membrane sector of the complex.</text>
</comment>
<comment type="subcellular location">
    <subcellularLocation>
        <location evidence="1">Cell inner membrane</location>
        <topology evidence="1">Multi-pass membrane protein</topology>
    </subcellularLocation>
</comment>
<comment type="similarity">
    <text evidence="1">Belongs to the complex I subunit 2 family.</text>
</comment>
<name>NUON_MAGMM</name>
<reference key="1">
    <citation type="journal article" date="2009" name="Appl. Environ. Microbiol.">
        <title>Complete genome sequence of the chemolithoautotrophic marine magnetotactic coccus strain MC-1.</title>
        <authorList>
            <person name="Schubbe S."/>
            <person name="Williams T.J."/>
            <person name="Xie G."/>
            <person name="Kiss H.E."/>
            <person name="Brettin T.S."/>
            <person name="Martinez D."/>
            <person name="Ross C.A."/>
            <person name="Schuler D."/>
            <person name="Cox B.L."/>
            <person name="Nealson K.H."/>
            <person name="Bazylinski D.A."/>
        </authorList>
    </citation>
    <scope>NUCLEOTIDE SEQUENCE [LARGE SCALE GENOMIC DNA]</scope>
    <source>
        <strain>ATCC BAA-1437 / JCM 17883 / MC-1</strain>
    </source>
</reference>
<keyword id="KW-0997">Cell inner membrane</keyword>
<keyword id="KW-1003">Cell membrane</keyword>
<keyword id="KW-0472">Membrane</keyword>
<keyword id="KW-0520">NAD</keyword>
<keyword id="KW-0874">Quinone</keyword>
<keyword id="KW-1185">Reference proteome</keyword>
<keyword id="KW-1278">Translocase</keyword>
<keyword id="KW-0812">Transmembrane</keyword>
<keyword id="KW-1133">Transmembrane helix</keyword>
<keyword id="KW-0813">Transport</keyword>
<keyword id="KW-0830">Ubiquinone</keyword>
<protein>
    <recommendedName>
        <fullName evidence="1">NADH-quinone oxidoreductase subunit N</fullName>
        <ecNumber evidence="1">7.1.1.-</ecNumber>
    </recommendedName>
    <alternativeName>
        <fullName evidence="1">NADH dehydrogenase I subunit N</fullName>
    </alternativeName>
    <alternativeName>
        <fullName evidence="1">NDH-1 subunit N</fullName>
    </alternativeName>
</protein>
<accession>A0LDR4</accession>
<sequence length="483" mass="51796">MAIQMPDINLALMLPEIVISVVAMGLLLASAWWEGAEGARRIRRIAAGALMVAMVITLLGVGATQSSTFGGMFVNDRFAAFMKVMLYLSTLLPMVVSWVYLEKSKLGNGEYFVLTLFAMLGGMFMISSGSFLVLYLGIELLSLAIYVLAAYKRDDLASNEAGLKYFVLGSMASGILLYGISLIYGVTGSVDFATINAYLQQDHHSMLGITMGLILVVSGLSFKIAAAPFHMWAPDVYEGAPTSVTAFMAAMPKIAAFAALFRVLVEAFGPMHATWGPIMALLAVVSMGVGALAGLGQSNIKRLLAYSSIGHVGYALIGLAVGNQMGYEAVLVYLTIYIFMNVGAFGLILVLNKEGFGDQIEDYKGLSAKRPGLALLMAIFMFSMAGIPPLAGFMAKLQIFMAAIDAHMYTVAILGVLFSAVSAFYYLKVIKTMYFDEAERAFDMPMDFLSRAIVGVSGILVVLWGILPGSLMASVAETIKSLM</sequence>
<dbReference type="EC" id="7.1.1.-" evidence="1"/>
<dbReference type="EMBL" id="CP000471">
    <property type="protein sequence ID" value="ABK46107.1"/>
    <property type="molecule type" value="Genomic_DNA"/>
</dbReference>
<dbReference type="RefSeq" id="WP_011715161.1">
    <property type="nucleotide sequence ID" value="NC_008576.1"/>
</dbReference>
<dbReference type="SMR" id="A0LDR4"/>
<dbReference type="STRING" id="156889.Mmc1_3622"/>
<dbReference type="KEGG" id="mgm:Mmc1_3622"/>
<dbReference type="eggNOG" id="COG1007">
    <property type="taxonomic scope" value="Bacteria"/>
</dbReference>
<dbReference type="HOGENOM" id="CLU_007100_1_3_5"/>
<dbReference type="OrthoDB" id="9811718at2"/>
<dbReference type="Proteomes" id="UP000002586">
    <property type="component" value="Chromosome"/>
</dbReference>
<dbReference type="GO" id="GO:0005886">
    <property type="term" value="C:plasma membrane"/>
    <property type="evidence" value="ECO:0007669"/>
    <property type="project" value="UniProtKB-SubCell"/>
</dbReference>
<dbReference type="GO" id="GO:0008137">
    <property type="term" value="F:NADH dehydrogenase (ubiquinone) activity"/>
    <property type="evidence" value="ECO:0007669"/>
    <property type="project" value="InterPro"/>
</dbReference>
<dbReference type="GO" id="GO:0050136">
    <property type="term" value="F:NADH:ubiquinone reductase (non-electrogenic) activity"/>
    <property type="evidence" value="ECO:0007669"/>
    <property type="project" value="UniProtKB-UniRule"/>
</dbReference>
<dbReference type="GO" id="GO:0048038">
    <property type="term" value="F:quinone binding"/>
    <property type="evidence" value="ECO:0007669"/>
    <property type="project" value="UniProtKB-KW"/>
</dbReference>
<dbReference type="GO" id="GO:0042773">
    <property type="term" value="P:ATP synthesis coupled electron transport"/>
    <property type="evidence" value="ECO:0007669"/>
    <property type="project" value="InterPro"/>
</dbReference>
<dbReference type="HAMAP" id="MF_00445">
    <property type="entry name" value="NDH1_NuoN_1"/>
    <property type="match status" value="1"/>
</dbReference>
<dbReference type="InterPro" id="IPR010096">
    <property type="entry name" value="NADH-Q_OxRdtase_suN/2"/>
</dbReference>
<dbReference type="InterPro" id="IPR001750">
    <property type="entry name" value="ND/Mrp_TM"/>
</dbReference>
<dbReference type="NCBIfam" id="TIGR01770">
    <property type="entry name" value="NDH_I_N"/>
    <property type="match status" value="1"/>
</dbReference>
<dbReference type="NCBIfam" id="NF004440">
    <property type="entry name" value="PRK05777.1-3"/>
    <property type="match status" value="1"/>
</dbReference>
<dbReference type="PANTHER" id="PTHR22773">
    <property type="entry name" value="NADH DEHYDROGENASE"/>
    <property type="match status" value="1"/>
</dbReference>
<dbReference type="Pfam" id="PF00361">
    <property type="entry name" value="Proton_antipo_M"/>
    <property type="match status" value="1"/>
</dbReference>
<dbReference type="PRINTS" id="PR01434">
    <property type="entry name" value="NADHDHGNASE5"/>
</dbReference>
<organism>
    <name type="scientific">Magnetococcus marinus (strain ATCC BAA-1437 / JCM 17883 / MC-1)</name>
    <dbReference type="NCBI Taxonomy" id="156889"/>
    <lineage>
        <taxon>Bacteria</taxon>
        <taxon>Pseudomonadati</taxon>
        <taxon>Pseudomonadota</taxon>
        <taxon>Alphaproteobacteria</taxon>
        <taxon>Magnetococcales</taxon>
        <taxon>Magnetococcaceae</taxon>
        <taxon>Magnetococcus</taxon>
    </lineage>
</organism>
<proteinExistence type="inferred from homology"/>
<evidence type="ECO:0000255" key="1">
    <source>
        <dbReference type="HAMAP-Rule" id="MF_00445"/>
    </source>
</evidence>
<gene>
    <name evidence="1" type="primary">nuoN</name>
    <name type="ordered locus">Mmc1_3622</name>
</gene>